<dbReference type="EC" id="6.1.1.17" evidence="1"/>
<dbReference type="EMBL" id="CP000416">
    <property type="protein sequence ID" value="ABJ63254.1"/>
    <property type="molecule type" value="Genomic_DNA"/>
</dbReference>
<dbReference type="RefSeq" id="WP_011666891.1">
    <property type="nucleotide sequence ID" value="NC_008497.1"/>
</dbReference>
<dbReference type="SMR" id="Q03U68"/>
<dbReference type="STRING" id="387344.LVIS_0080"/>
<dbReference type="KEGG" id="lbr:LVIS_0080"/>
<dbReference type="eggNOG" id="COG0008">
    <property type="taxonomic scope" value="Bacteria"/>
</dbReference>
<dbReference type="HOGENOM" id="CLU_015768_6_1_9"/>
<dbReference type="Proteomes" id="UP000001652">
    <property type="component" value="Chromosome"/>
</dbReference>
<dbReference type="GO" id="GO:0005829">
    <property type="term" value="C:cytosol"/>
    <property type="evidence" value="ECO:0007669"/>
    <property type="project" value="TreeGrafter"/>
</dbReference>
<dbReference type="GO" id="GO:0005524">
    <property type="term" value="F:ATP binding"/>
    <property type="evidence" value="ECO:0007669"/>
    <property type="project" value="UniProtKB-UniRule"/>
</dbReference>
<dbReference type="GO" id="GO:0004818">
    <property type="term" value="F:glutamate-tRNA ligase activity"/>
    <property type="evidence" value="ECO:0007669"/>
    <property type="project" value="UniProtKB-UniRule"/>
</dbReference>
<dbReference type="GO" id="GO:0000049">
    <property type="term" value="F:tRNA binding"/>
    <property type="evidence" value="ECO:0007669"/>
    <property type="project" value="InterPro"/>
</dbReference>
<dbReference type="GO" id="GO:0008270">
    <property type="term" value="F:zinc ion binding"/>
    <property type="evidence" value="ECO:0007669"/>
    <property type="project" value="InterPro"/>
</dbReference>
<dbReference type="GO" id="GO:0006424">
    <property type="term" value="P:glutamyl-tRNA aminoacylation"/>
    <property type="evidence" value="ECO:0007669"/>
    <property type="project" value="UniProtKB-UniRule"/>
</dbReference>
<dbReference type="CDD" id="cd00808">
    <property type="entry name" value="GluRS_core"/>
    <property type="match status" value="1"/>
</dbReference>
<dbReference type="FunFam" id="3.40.50.620:FF:000007">
    <property type="entry name" value="Glutamate--tRNA ligase"/>
    <property type="match status" value="1"/>
</dbReference>
<dbReference type="Gene3D" id="1.10.10.350">
    <property type="match status" value="1"/>
</dbReference>
<dbReference type="Gene3D" id="3.40.50.620">
    <property type="entry name" value="HUPs"/>
    <property type="match status" value="1"/>
</dbReference>
<dbReference type="HAMAP" id="MF_00022">
    <property type="entry name" value="Glu_tRNA_synth_type1"/>
    <property type="match status" value="1"/>
</dbReference>
<dbReference type="InterPro" id="IPR045462">
    <property type="entry name" value="aa-tRNA-synth_I_cd-bd"/>
</dbReference>
<dbReference type="InterPro" id="IPR020751">
    <property type="entry name" value="aa-tRNA-synth_I_codon-bd_sub2"/>
</dbReference>
<dbReference type="InterPro" id="IPR001412">
    <property type="entry name" value="aa-tRNA-synth_I_CS"/>
</dbReference>
<dbReference type="InterPro" id="IPR008925">
    <property type="entry name" value="aa_tRNA-synth_I_cd-bd_sf"/>
</dbReference>
<dbReference type="InterPro" id="IPR004527">
    <property type="entry name" value="Glu-tRNA-ligase_bac/mito"/>
</dbReference>
<dbReference type="InterPro" id="IPR000924">
    <property type="entry name" value="Glu/Gln-tRNA-synth"/>
</dbReference>
<dbReference type="InterPro" id="IPR020058">
    <property type="entry name" value="Glu/Gln-tRNA-synth_Ib_cat-dom"/>
</dbReference>
<dbReference type="InterPro" id="IPR049940">
    <property type="entry name" value="GluQ/Sye"/>
</dbReference>
<dbReference type="InterPro" id="IPR033910">
    <property type="entry name" value="GluRS_core"/>
</dbReference>
<dbReference type="InterPro" id="IPR014729">
    <property type="entry name" value="Rossmann-like_a/b/a_fold"/>
</dbReference>
<dbReference type="NCBIfam" id="TIGR00464">
    <property type="entry name" value="gltX_bact"/>
    <property type="match status" value="1"/>
</dbReference>
<dbReference type="PANTHER" id="PTHR43311">
    <property type="entry name" value="GLUTAMATE--TRNA LIGASE"/>
    <property type="match status" value="1"/>
</dbReference>
<dbReference type="PANTHER" id="PTHR43311:SF2">
    <property type="entry name" value="GLUTAMATE--TRNA LIGASE, MITOCHONDRIAL-RELATED"/>
    <property type="match status" value="1"/>
</dbReference>
<dbReference type="Pfam" id="PF19269">
    <property type="entry name" value="Anticodon_2"/>
    <property type="match status" value="1"/>
</dbReference>
<dbReference type="Pfam" id="PF00749">
    <property type="entry name" value="tRNA-synt_1c"/>
    <property type="match status" value="1"/>
</dbReference>
<dbReference type="PRINTS" id="PR00987">
    <property type="entry name" value="TRNASYNTHGLU"/>
</dbReference>
<dbReference type="SUPFAM" id="SSF48163">
    <property type="entry name" value="An anticodon-binding domain of class I aminoacyl-tRNA synthetases"/>
    <property type="match status" value="1"/>
</dbReference>
<dbReference type="SUPFAM" id="SSF52374">
    <property type="entry name" value="Nucleotidylyl transferase"/>
    <property type="match status" value="1"/>
</dbReference>
<dbReference type="PROSITE" id="PS00178">
    <property type="entry name" value="AA_TRNA_LIGASE_I"/>
    <property type="match status" value="1"/>
</dbReference>
<accession>Q03U68</accession>
<evidence type="ECO:0000255" key="1">
    <source>
        <dbReference type="HAMAP-Rule" id="MF_00022"/>
    </source>
</evidence>
<proteinExistence type="inferred from homology"/>
<protein>
    <recommendedName>
        <fullName evidence="1">Glutamate--tRNA ligase 1</fullName>
        <ecNumber evidence="1">6.1.1.17</ecNumber>
    </recommendedName>
    <alternativeName>
        <fullName evidence="1">Glutamyl-tRNA synthetase 1</fullName>
        <shortName evidence="1">GluRS 1</shortName>
    </alternativeName>
</protein>
<name>SYE1_LEVBA</name>
<comment type="function">
    <text evidence="1">Catalyzes the attachment of glutamate to tRNA(Glu) in a two-step reaction: glutamate is first activated by ATP to form Glu-AMP and then transferred to the acceptor end of tRNA(Glu).</text>
</comment>
<comment type="catalytic activity">
    <reaction evidence="1">
        <text>tRNA(Glu) + L-glutamate + ATP = L-glutamyl-tRNA(Glu) + AMP + diphosphate</text>
        <dbReference type="Rhea" id="RHEA:23540"/>
        <dbReference type="Rhea" id="RHEA-COMP:9663"/>
        <dbReference type="Rhea" id="RHEA-COMP:9680"/>
        <dbReference type="ChEBI" id="CHEBI:29985"/>
        <dbReference type="ChEBI" id="CHEBI:30616"/>
        <dbReference type="ChEBI" id="CHEBI:33019"/>
        <dbReference type="ChEBI" id="CHEBI:78442"/>
        <dbReference type="ChEBI" id="CHEBI:78520"/>
        <dbReference type="ChEBI" id="CHEBI:456215"/>
        <dbReference type="EC" id="6.1.1.17"/>
    </reaction>
</comment>
<comment type="subunit">
    <text evidence="1">Monomer.</text>
</comment>
<comment type="subcellular location">
    <subcellularLocation>
        <location evidence="1">Cytoplasm</location>
    </subcellularLocation>
</comment>
<comment type="similarity">
    <text evidence="1">Belongs to the class-I aminoacyl-tRNA synthetase family. Glutamate--tRNA ligase type 1 subfamily.</text>
</comment>
<feature type="chain" id="PRO_0000367695" description="Glutamate--tRNA ligase 1">
    <location>
        <begin position="1"/>
        <end position="503"/>
    </location>
</feature>
<feature type="short sequence motif" description="'HIGH' region" evidence="1">
    <location>
        <begin position="17"/>
        <end position="27"/>
    </location>
</feature>
<feature type="short sequence motif" description="'KMSKS' region" evidence="1">
    <location>
        <begin position="261"/>
        <end position="265"/>
    </location>
</feature>
<feature type="binding site" evidence="1">
    <location>
        <position position="264"/>
    </location>
    <ligand>
        <name>ATP</name>
        <dbReference type="ChEBI" id="CHEBI:30616"/>
    </ligand>
</feature>
<keyword id="KW-0030">Aminoacyl-tRNA synthetase</keyword>
<keyword id="KW-0067">ATP-binding</keyword>
<keyword id="KW-0963">Cytoplasm</keyword>
<keyword id="KW-0436">Ligase</keyword>
<keyword id="KW-0547">Nucleotide-binding</keyword>
<keyword id="KW-0648">Protein biosynthesis</keyword>
<keyword id="KW-1185">Reference proteome</keyword>
<sequence>MSENSTVKKNVRVRYAPSPTGFLHIGNAQSALFNYLFARHYHGTMVLRIEDTDVKRNVPHGEDSQIDNLHWLGIDWDEGPDKPNPKYAPYHQTERQDLYHRYITQLLDQGLAYKDYATEDELTTMRDQQRAAGEAPHYDGRWYGRSVADQQAAEARGLKPSIRLHLPANHEYAWDDIIKGHVAFNSDNMGGDFIIEKSNGMPTYNFAVVIDDYLMDITDVLRGDDHIANTPKQIAVYEALGLKHPNFGHITLIYNPKTRKKLSKRDKETLQFISQYKNQGYLSEAIFNFIAFLGWSPEGEDELFSREELIERYDPARMSKSPAYFDQSKLDWINAAYIKRLDLDDMTDRVLELVDEGQTDVARQVKALQLPDLRTLTSQVCKIYQTEIHQLSEIMDKVLFYVTILQEPLDYDQLRQFDRTATLAVLTAFRKHVQALPVDVATPDFKKMIQTVSQETGVTGRNLYFPLNVAFTGDHSAPQIDEVLRLFANSTIIELLTKAIAHV</sequence>
<reference key="1">
    <citation type="journal article" date="2006" name="Proc. Natl. Acad. Sci. U.S.A.">
        <title>Comparative genomics of the lactic acid bacteria.</title>
        <authorList>
            <person name="Makarova K.S."/>
            <person name="Slesarev A."/>
            <person name="Wolf Y.I."/>
            <person name="Sorokin A."/>
            <person name="Mirkin B."/>
            <person name="Koonin E.V."/>
            <person name="Pavlov A."/>
            <person name="Pavlova N."/>
            <person name="Karamychev V."/>
            <person name="Polouchine N."/>
            <person name="Shakhova V."/>
            <person name="Grigoriev I."/>
            <person name="Lou Y."/>
            <person name="Rohksar D."/>
            <person name="Lucas S."/>
            <person name="Huang K."/>
            <person name="Goodstein D.M."/>
            <person name="Hawkins T."/>
            <person name="Plengvidhya V."/>
            <person name="Welker D."/>
            <person name="Hughes J."/>
            <person name="Goh Y."/>
            <person name="Benson A."/>
            <person name="Baldwin K."/>
            <person name="Lee J.-H."/>
            <person name="Diaz-Muniz I."/>
            <person name="Dosti B."/>
            <person name="Smeianov V."/>
            <person name="Wechter W."/>
            <person name="Barabote R."/>
            <person name="Lorca G."/>
            <person name="Altermann E."/>
            <person name="Barrangou R."/>
            <person name="Ganesan B."/>
            <person name="Xie Y."/>
            <person name="Rawsthorne H."/>
            <person name="Tamir D."/>
            <person name="Parker C."/>
            <person name="Breidt F."/>
            <person name="Broadbent J.R."/>
            <person name="Hutkins R."/>
            <person name="O'Sullivan D."/>
            <person name="Steele J."/>
            <person name="Unlu G."/>
            <person name="Saier M.H. Jr."/>
            <person name="Klaenhammer T."/>
            <person name="Richardson P."/>
            <person name="Kozyavkin S."/>
            <person name="Weimer B.C."/>
            <person name="Mills D.A."/>
        </authorList>
    </citation>
    <scope>NUCLEOTIDE SEQUENCE [LARGE SCALE GENOMIC DNA]</scope>
    <source>
        <strain>ATCC 367 / BCRC 12310 / CIP 105137 / JCM 1170 / LMG 11437 / NCIMB 947 / NCTC 947</strain>
    </source>
</reference>
<gene>
    <name evidence="1" type="primary">gltX1</name>
    <name type="ordered locus">LVIS_0080</name>
</gene>
<organism>
    <name type="scientific">Levilactobacillus brevis (strain ATCC 367 / BCRC 12310 / CIP 105137 / JCM 1170 / LMG 11437 / NCIMB 947 / NCTC 947)</name>
    <name type="common">Lactobacillus brevis</name>
    <dbReference type="NCBI Taxonomy" id="387344"/>
    <lineage>
        <taxon>Bacteria</taxon>
        <taxon>Bacillati</taxon>
        <taxon>Bacillota</taxon>
        <taxon>Bacilli</taxon>
        <taxon>Lactobacillales</taxon>
        <taxon>Lactobacillaceae</taxon>
        <taxon>Levilactobacillus</taxon>
    </lineage>
</organism>